<sequence length="415" mass="46784">MEVNFVTNRIEIAPTTRHEGHAKLILEVDEEGIVNKAYYLNTTPVRGFETMLKGKPAEFAPIAVMRICGICQTTHGIASCEAIENAIDCEVPDDGLLLRELVGIGNRLHSHPLHHLLTIDDFLKPDETDLKIELIKLIQRMRKVGQLVVDIVGGEGIHPPNIVIGGMRTNITERAKSRLYYALRQYEKDAYELYEKYTELIERYLEEIGIPDLGAHEYPYIATHTTYGDRYAINWDDVTEIPAQRYYDDEEAKQTTTIQIPLYAGVPAEGGPRARMVKFGNFREGGSAMDINIARAQENLGAVYRALEILDELDLNGKTRAEVEYKDGFGIGVHEAPRATNTHMAEVGKDGKIKSYRIIAASTWNFPIVEKAIEGYPQQYAEVIMRAYDICASCATHVIVKDEETKEIIEVRKML</sequence>
<accession>Q60338</accession>
<dbReference type="EC" id="1.12.98.1"/>
<dbReference type="EMBL" id="L77117">
    <property type="status" value="NOT_ANNOTATED_CDS"/>
    <property type="molecule type" value="Genomic_DNA"/>
</dbReference>
<dbReference type="PIR" id="A64299">
    <property type="entry name" value="A64299"/>
</dbReference>
<dbReference type="SMR" id="Q60338"/>
<dbReference type="FunCoup" id="Q60338">
    <property type="interactions" value="4"/>
</dbReference>
<dbReference type="InParanoid" id="Q60338"/>
<dbReference type="PhylomeDB" id="Q60338"/>
<dbReference type="Proteomes" id="UP000000805">
    <property type="component" value="Chromosome"/>
</dbReference>
<dbReference type="GO" id="GO:0050454">
    <property type="term" value="F:coenzyme F420 hydrogenase activity"/>
    <property type="evidence" value="ECO:0007669"/>
    <property type="project" value="UniProtKB-EC"/>
</dbReference>
<dbReference type="GO" id="GO:0008901">
    <property type="term" value="F:ferredoxin hydrogenase activity"/>
    <property type="evidence" value="ECO:0007669"/>
    <property type="project" value="InterPro"/>
</dbReference>
<dbReference type="GO" id="GO:0050660">
    <property type="term" value="F:flavin adenine dinucleotide binding"/>
    <property type="evidence" value="ECO:0007669"/>
    <property type="project" value="InterPro"/>
</dbReference>
<dbReference type="GO" id="GO:0051536">
    <property type="term" value="F:iron-sulfur cluster binding"/>
    <property type="evidence" value="ECO:0007669"/>
    <property type="project" value="InterPro"/>
</dbReference>
<dbReference type="GO" id="GO:0016151">
    <property type="term" value="F:nickel cation binding"/>
    <property type="evidence" value="ECO:0007669"/>
    <property type="project" value="InterPro"/>
</dbReference>
<dbReference type="Gene3D" id="1.10.645.10">
    <property type="entry name" value="Cytochrome-c3 Hydrogenase, chain B"/>
    <property type="match status" value="1"/>
</dbReference>
<dbReference type="InterPro" id="IPR017682">
    <property type="entry name" value="Coenz_F420_hydrogenase_asu"/>
</dbReference>
<dbReference type="InterPro" id="IPR001501">
    <property type="entry name" value="Ni-dep_hyd_lsu"/>
</dbReference>
<dbReference type="InterPro" id="IPR018194">
    <property type="entry name" value="Ni-dep_hyd_lsu_Ni_BS"/>
</dbReference>
<dbReference type="InterPro" id="IPR029014">
    <property type="entry name" value="NiFe-Hase_large"/>
</dbReference>
<dbReference type="NCBIfam" id="TIGR03295">
    <property type="entry name" value="frhA"/>
    <property type="match status" value="1"/>
</dbReference>
<dbReference type="PANTHER" id="PTHR43600:SF1">
    <property type="entry name" value="COENZYME F420 HYDROGENASE SUBUNIT ALPHA"/>
    <property type="match status" value="1"/>
</dbReference>
<dbReference type="PANTHER" id="PTHR43600">
    <property type="entry name" value="COENZYME F420 HYDROGENASE, SUBUNIT ALPHA"/>
    <property type="match status" value="1"/>
</dbReference>
<dbReference type="Pfam" id="PF00374">
    <property type="entry name" value="NiFeSe_Hases"/>
    <property type="match status" value="1"/>
</dbReference>
<dbReference type="SUPFAM" id="SSF56762">
    <property type="entry name" value="HydB/Nqo4-like"/>
    <property type="match status" value="1"/>
</dbReference>
<dbReference type="PROSITE" id="PS00507">
    <property type="entry name" value="NI_HGENASE_L_1"/>
    <property type="match status" value="1"/>
</dbReference>
<dbReference type="PROSITE" id="PS00508">
    <property type="entry name" value="NI_HGENASE_L_2"/>
    <property type="match status" value="1"/>
</dbReference>
<name>FRHA_METJA</name>
<reference key="1">
    <citation type="journal article" date="1996" name="Science">
        <title>Complete genome sequence of the methanogenic archaeon, Methanococcus jannaschii.</title>
        <authorList>
            <person name="Bult C.J."/>
            <person name="White O."/>
            <person name="Olsen G.J."/>
            <person name="Zhou L."/>
            <person name="Fleischmann R.D."/>
            <person name="Sutton G.G."/>
            <person name="Blake J.A."/>
            <person name="FitzGerald L.M."/>
            <person name="Clayton R.A."/>
            <person name="Gocayne J.D."/>
            <person name="Kerlavage A.R."/>
            <person name="Dougherty B.A."/>
            <person name="Tomb J.-F."/>
            <person name="Adams M.D."/>
            <person name="Reich C.I."/>
            <person name="Overbeek R."/>
            <person name="Kirkness E.F."/>
            <person name="Weinstock K.G."/>
            <person name="Merrick J.M."/>
            <person name="Glodek A."/>
            <person name="Scott J.L."/>
            <person name="Geoghagen N.S.M."/>
            <person name="Weidman J.F."/>
            <person name="Fuhrmann J.L."/>
            <person name="Nguyen D."/>
            <person name="Utterback T.R."/>
            <person name="Kelley J.M."/>
            <person name="Peterson J.D."/>
            <person name="Sadow P.W."/>
            <person name="Hanna M.C."/>
            <person name="Cotton M.D."/>
            <person name="Roberts K.M."/>
            <person name="Hurst M.A."/>
            <person name="Kaine B.P."/>
            <person name="Borodovsky M."/>
            <person name="Klenk H.-P."/>
            <person name="Fraser C.M."/>
            <person name="Smith H.O."/>
            <person name="Woese C.R."/>
            <person name="Venter J.C."/>
        </authorList>
    </citation>
    <scope>NUCLEOTIDE SEQUENCE [LARGE SCALE GENOMIC DNA]</scope>
    <source>
        <strain>ATCC 43067 / DSM 2661 / JAL-1 / JCM 10045 / NBRC 100440</strain>
    </source>
</reference>
<comment type="function">
    <text evidence="1">Reduces the physiological low-potential two-electron acceptor coenzyme F420, and the artificial one-electron acceptor methylviologen.</text>
</comment>
<comment type="catalytic activity">
    <reaction>
        <text>oxidized coenzyme F420-(gamma-L-Glu)(n) + H2 + H(+) = reduced coenzyme F420-(gamma-L-Glu)(n)</text>
        <dbReference type="Rhea" id="RHEA:23760"/>
        <dbReference type="Rhea" id="RHEA-COMP:12939"/>
        <dbReference type="Rhea" id="RHEA-COMP:14378"/>
        <dbReference type="ChEBI" id="CHEBI:15378"/>
        <dbReference type="ChEBI" id="CHEBI:18276"/>
        <dbReference type="ChEBI" id="CHEBI:133980"/>
        <dbReference type="ChEBI" id="CHEBI:139511"/>
        <dbReference type="EC" id="1.12.98.1"/>
    </reaction>
</comment>
<comment type="cofactor">
    <cofactor evidence="1">
        <name>Ni(2+)</name>
        <dbReference type="ChEBI" id="CHEBI:49786"/>
    </cofactor>
</comment>
<comment type="cofactor">
    <cofactor evidence="1">
        <name>iron-sulfur cluster</name>
        <dbReference type="ChEBI" id="CHEBI:30408"/>
    </cofactor>
    <text evidence="1">There are 12-13 Fe atoms/(alpha(1)beta(1)gamma(1)) unit of the FRH.</text>
</comment>
<comment type="cofactor">
    <cofactor evidence="1">
        <name>FAD</name>
        <dbReference type="ChEBI" id="CHEBI:57692"/>
    </cofactor>
</comment>
<comment type="subunit">
    <text evidence="1">Heterocomplex of the form (alpha(1)beta(1)gamma(1))(8).</text>
</comment>
<comment type="similarity">
    <text evidence="3">Belongs to the [NiFe]/[NiFeSe] hydrogenase large subunit family.</text>
</comment>
<organism>
    <name type="scientific">Methanocaldococcus jannaschii (strain ATCC 43067 / DSM 2661 / JAL-1 / JCM 10045 / NBRC 100440)</name>
    <name type="common">Methanococcus jannaschii</name>
    <dbReference type="NCBI Taxonomy" id="243232"/>
    <lineage>
        <taxon>Archaea</taxon>
        <taxon>Methanobacteriati</taxon>
        <taxon>Methanobacteriota</taxon>
        <taxon>Methanomada group</taxon>
        <taxon>Methanococci</taxon>
        <taxon>Methanococcales</taxon>
        <taxon>Methanocaldococcaceae</taxon>
        <taxon>Methanocaldococcus</taxon>
    </lineage>
</organism>
<gene>
    <name type="primary">frhA</name>
    <name type="ordered locus">MJ0029</name>
</gene>
<evidence type="ECO:0000250" key="1"/>
<evidence type="ECO:0000255" key="2"/>
<evidence type="ECO:0000305" key="3"/>
<proteinExistence type="inferred from homology"/>
<feature type="chain" id="PRO_0000199722" description="Coenzyme F420 hydrogenase subunit alpha">
    <location>
        <begin position="1"/>
        <end position="415"/>
    </location>
</feature>
<feature type="binding site" evidence="2">
    <location>
        <position position="68"/>
    </location>
    <ligand>
        <name>Ni(2+)</name>
        <dbReference type="ChEBI" id="CHEBI:49786"/>
    </ligand>
</feature>
<feature type="binding site" evidence="2">
    <location>
        <position position="71"/>
    </location>
    <ligand>
        <name>Ni(2+)</name>
        <dbReference type="ChEBI" id="CHEBI:49786"/>
    </ligand>
</feature>
<feature type="binding site" evidence="2">
    <location>
        <position position="391"/>
    </location>
    <ligand>
        <name>Ni(2+)</name>
        <dbReference type="ChEBI" id="CHEBI:49786"/>
    </ligand>
</feature>
<feature type="binding site" evidence="2">
    <location>
        <position position="394"/>
    </location>
    <ligand>
        <name>Ni(2+)</name>
        <dbReference type="ChEBI" id="CHEBI:49786"/>
    </ligand>
</feature>
<protein>
    <recommendedName>
        <fullName>Coenzyme F420 hydrogenase subunit alpha</fullName>
        <ecNumber>1.12.98.1</ecNumber>
    </recommendedName>
    <alternativeName>
        <fullName>8-hydroxy-5-deazaflavin-reducing hydrogenase subunit alpha</fullName>
        <shortName>FRH</shortName>
    </alternativeName>
</protein>
<keyword id="KW-0274">FAD</keyword>
<keyword id="KW-0285">Flavoprotein</keyword>
<keyword id="KW-0479">Metal-binding</keyword>
<keyword id="KW-0533">Nickel</keyword>
<keyword id="KW-0560">Oxidoreductase</keyword>
<keyword id="KW-1185">Reference proteome</keyword>